<keyword id="KW-0067">ATP-binding</keyword>
<keyword id="KW-0347">Helicase</keyword>
<keyword id="KW-0378">Hydrolase</keyword>
<keyword id="KW-0426">Late protein</keyword>
<keyword id="KW-0547">Nucleotide-binding</keyword>
<keyword id="KW-0804">Transcription</keyword>
<keyword id="KW-0805">Transcription regulation</keyword>
<keyword id="KW-0946">Virion</keyword>
<feature type="chain" id="PRO_0000373110" description="Early transcription factor large subunit homolog">
    <location>
        <begin position="1"/>
        <end position="1133"/>
    </location>
</feature>
<feature type="domain" description="Helicase ATP-binding" evidence="3">
    <location>
        <begin position="52"/>
        <end position="352"/>
    </location>
</feature>
<feature type="domain" description="Helicase C-terminal" evidence="4">
    <location>
        <begin position="524"/>
        <end position="724"/>
    </location>
</feature>
<feature type="short sequence motif" description="DEAH box">
    <location>
        <begin position="281"/>
        <end position="284"/>
    </location>
</feature>
<feature type="binding site" evidence="3">
    <location>
        <begin position="99"/>
        <end position="106"/>
    </location>
    <ligand>
        <name>ATP</name>
        <dbReference type="ChEBI" id="CHEBI:30616"/>
    </ligand>
</feature>
<name>ETFS_ASFWA</name>
<evidence type="ECO:0000250" key="1">
    <source>
        <dbReference type="UniProtKB" id="P04308"/>
    </source>
</evidence>
<evidence type="ECO:0000250" key="2">
    <source>
        <dbReference type="UniProtKB" id="Q89525"/>
    </source>
</evidence>
<evidence type="ECO:0000255" key="3">
    <source>
        <dbReference type="PROSITE-ProRule" id="PRU00541"/>
    </source>
</evidence>
<evidence type="ECO:0000255" key="4">
    <source>
        <dbReference type="PROSITE-ProRule" id="PRU00542"/>
    </source>
</evidence>
<evidence type="ECO:0000305" key="5"/>
<dbReference type="EC" id="3.6.4.13"/>
<dbReference type="EMBL" id="AY261366">
    <property type="status" value="NOT_ANNOTATED_CDS"/>
    <property type="molecule type" value="Genomic_DNA"/>
</dbReference>
<dbReference type="Proteomes" id="UP000000858">
    <property type="component" value="Segment"/>
</dbReference>
<dbReference type="GO" id="GO:0044423">
    <property type="term" value="C:virion component"/>
    <property type="evidence" value="ECO:0007669"/>
    <property type="project" value="UniProtKB-KW"/>
</dbReference>
<dbReference type="GO" id="GO:0005524">
    <property type="term" value="F:ATP binding"/>
    <property type="evidence" value="ECO:0007669"/>
    <property type="project" value="UniProtKB-KW"/>
</dbReference>
<dbReference type="GO" id="GO:0016887">
    <property type="term" value="F:ATP hydrolysis activity"/>
    <property type="evidence" value="ECO:0007669"/>
    <property type="project" value="RHEA"/>
</dbReference>
<dbReference type="GO" id="GO:0003724">
    <property type="term" value="F:RNA helicase activity"/>
    <property type="evidence" value="ECO:0007669"/>
    <property type="project" value="UniProtKB-EC"/>
</dbReference>
<dbReference type="Gene3D" id="3.40.50.300">
    <property type="entry name" value="P-loop containing nucleotide triphosphate hydrolases"/>
    <property type="match status" value="2"/>
</dbReference>
<dbReference type="InterPro" id="IPR001650">
    <property type="entry name" value="Helicase_C-like"/>
</dbReference>
<dbReference type="InterPro" id="IPR027417">
    <property type="entry name" value="P-loop_NTPase"/>
</dbReference>
<dbReference type="Pfam" id="PF00271">
    <property type="entry name" value="Helicase_C"/>
    <property type="match status" value="1"/>
</dbReference>
<dbReference type="SMART" id="SM00490">
    <property type="entry name" value="HELICc"/>
    <property type="match status" value="1"/>
</dbReference>
<dbReference type="SUPFAM" id="SSF52540">
    <property type="entry name" value="P-loop containing nucleoside triphosphate hydrolases"/>
    <property type="match status" value="1"/>
</dbReference>
<dbReference type="PROSITE" id="PS51192">
    <property type="entry name" value="HELICASE_ATP_BIND_1"/>
    <property type="match status" value="1"/>
</dbReference>
<dbReference type="PROSITE" id="PS51194">
    <property type="entry name" value="HELICASE_CTER"/>
    <property type="match status" value="1"/>
</dbReference>
<proteinExistence type="inferred from homology"/>
<sequence>MAYPELDAADFLQQLARRKEFKSLISPPVDQKELIRDLRAHFVQIGGPGCEKGGRAFFPCDPYASPFPSIKGLQLHNAQLFVQNFQNPNTPYSRLLLNWQTGTGKSIAAIAIARQFMNHYMNFIENAPWIFVVGFTRAIIQTEMLRRPELGFVSYKEVAELHRLLHIAKQSGSTTSVESRHLNGFVSTLKRRLTDRNRGGFFQFYGYKEFASKLFNITSKGEEKNFDVLSLFHRSDEAEDTLNENDISQFVQKISEAETNGLIRVNQKIMEQLRGGLLIADEIHNVYNIQERNNYGIALQYVLDAFPPHQAPRAVFMSATPVTGSVMEYVDLLNLLVPRHELPNGQPLQRQQLFDSSGHSVKWKKDALALVERLSTGRVSFLLDTNTNFYPERIFAGKMLSYKDEKLPYLHFIECPMSEYQLETLKQLGPDPKISSNAYSIYDMVFPNPKFSKQTEPKAYGLFNSTETPTALSMASTDWLLENGVQIIEPSRRAPFNVSGSFLSLQPPMHISGLAFYSGKYTQMMKDILSIIRQGRGKILIYHNRVRMSGVLILQEILQSNGILNEVSSPVGTTRCSICAAIRDDHTHSDHQFIPVRFTILHSEIEPAVRERSLALFNASSNLEGHQLRILIGSKVIVEGLNFQAVRYEMIMSLPLDIPRLIQVFGRVVRKNSHMELPPSERNVTIYLYVSTTPDGGPELAKYAQKLKEYILIQEGDKALRKHAIDGFTNQIKIDKPMLESLPLSPSITPANVGATVLNTFEAYGYGEQEVKTISNIIISLFMARPVWTYSELWKAVSTPKLIQGITIDNKLFSEDNFALALISLCYSKNQCKELWIQNRLCTIMHVPAKPEHLYVAAVLNHKKEPVLDIETYIRDFQPPMMHSIRITKYLEHSQTKEPFQVLYEKFQKDFQDEPMEQVLIHYPASFHYTMLEALIIDNLAGMGALVEVYKKFFIAFSKKDIQPFPDIFKIISHVPGDDNTLVGYATEDSVRLITSREDKTWHEIPLYMLNINVKRKENDIVIGYMESKGKALKFKIRPPIQVLKKNEITDIRMLNRGAVCETRGREEQQKIANQLGISLNLTKISAIKLCLLIRNNLLQKEMEARNQPNGMQDGIRWFYLFNDKMPSLVHTS</sequence>
<organismHost>
    <name type="scientific">Ornithodoros</name>
    <name type="common">relapsing fever ticks</name>
    <dbReference type="NCBI Taxonomy" id="6937"/>
</organismHost>
<organismHost>
    <name type="scientific">Phacochoerus aethiopicus</name>
    <name type="common">Warthog</name>
    <dbReference type="NCBI Taxonomy" id="85517"/>
</organismHost>
<organismHost>
    <name type="scientific">Phacochoerus africanus</name>
    <name type="common">Warthog</name>
    <dbReference type="NCBI Taxonomy" id="41426"/>
</organismHost>
<organismHost>
    <name type="scientific">Potamochoerus larvatus</name>
    <name type="common">Bushpig</name>
    <dbReference type="NCBI Taxonomy" id="273792"/>
</organismHost>
<organismHost>
    <name type="scientific">Sus scrofa</name>
    <name type="common">Pig</name>
    <dbReference type="NCBI Taxonomy" id="9823"/>
</organismHost>
<organism>
    <name type="scientific">African swine fever virus (isolate Warthog/Namibia/Wart80/1980)</name>
    <name type="common">ASFV</name>
    <dbReference type="NCBI Taxonomy" id="561444"/>
    <lineage>
        <taxon>Viruses</taxon>
        <taxon>Varidnaviria</taxon>
        <taxon>Bamfordvirae</taxon>
        <taxon>Nucleocytoviricota</taxon>
        <taxon>Pokkesviricetes</taxon>
        <taxon>Asfuvirales</taxon>
        <taxon>Asfarviridae</taxon>
        <taxon>Asfivirus</taxon>
        <taxon>African swine fever virus</taxon>
    </lineage>
</organism>
<gene>
    <name type="ordered locus">War-116</name>
</gene>
<comment type="function">
    <text evidence="1">Putative initation factor.</text>
</comment>
<comment type="catalytic activity">
    <reaction evidence="1">
        <text>ATP + H2O = ADP + phosphate + H(+)</text>
        <dbReference type="Rhea" id="RHEA:13065"/>
        <dbReference type="ChEBI" id="CHEBI:15377"/>
        <dbReference type="ChEBI" id="CHEBI:15378"/>
        <dbReference type="ChEBI" id="CHEBI:30616"/>
        <dbReference type="ChEBI" id="CHEBI:43474"/>
        <dbReference type="ChEBI" id="CHEBI:456216"/>
        <dbReference type="EC" id="3.6.4.13"/>
    </reaction>
</comment>
<comment type="subcellular location">
    <subcellularLocation>
        <location evidence="2">Virion</location>
    </subcellularLocation>
    <text evidence="2">Found in association with viral nucleoid.</text>
</comment>
<comment type="induction">
    <text evidence="5">Expressed in the late phase of the viral replicative cycle.</text>
</comment>
<comment type="similarity">
    <text evidence="5">Belongs to the DEAD box helicase family. DEAH subfamily.</text>
</comment>
<reference key="1">
    <citation type="submission" date="2003-03" db="EMBL/GenBank/DDBJ databases">
        <title>African swine fever virus genomes.</title>
        <authorList>
            <person name="Kutish G.F."/>
            <person name="Rock D.L."/>
        </authorList>
    </citation>
    <scope>NUCLEOTIDE SEQUENCE [LARGE SCALE GENOMIC DNA]</scope>
</reference>
<accession>P0C9A6</accession>
<protein>
    <recommendedName>
        <fullName evidence="2">Early transcription factor large subunit homolog</fullName>
        <ecNumber>3.6.4.13</ecNumber>
    </recommendedName>
    <alternativeName>
        <fullName evidence="2">ATP-dependent helicase VETFS homolog</fullName>
    </alternativeName>
</protein>